<feature type="chain" id="PRO_0000309466" description="Trimeric intracellular cation channel type A">
    <location>
        <begin position="1"/>
        <end position="297"/>
    </location>
</feature>
<feature type="topological domain" description="Lumenal" evidence="7">
    <location>
        <begin position="1"/>
        <end position="18"/>
    </location>
</feature>
<feature type="transmembrane region" description="Helical;Name=1" evidence="5">
    <location>
        <begin position="19"/>
        <end position="39"/>
    </location>
</feature>
<feature type="topological domain" description="Cytoplasmic" evidence="7">
    <location>
        <begin position="40"/>
        <end position="51"/>
    </location>
</feature>
<feature type="transmembrane region" description="Helical;Name=2" evidence="5">
    <location>
        <begin position="52"/>
        <end position="72"/>
    </location>
</feature>
<feature type="topological domain" description="Lumenal" evidence="7">
    <location>
        <begin position="73"/>
        <end position="85"/>
    </location>
</feature>
<feature type="transmembrane region" description="Helical;Name=3" evidence="5">
    <location>
        <begin position="86"/>
        <end position="106"/>
    </location>
</feature>
<feature type="topological domain" description="Cytoplasmic" evidence="7">
    <location>
        <begin position="107"/>
        <end position="143"/>
    </location>
</feature>
<feature type="transmembrane region" description="Helical;Name=4" evidence="5">
    <location>
        <begin position="144"/>
        <end position="164"/>
    </location>
</feature>
<feature type="topological domain" description="Lumenal" evidence="7">
    <location>
        <begin position="165"/>
        <end position="177"/>
    </location>
</feature>
<feature type="transmembrane region" description="Helical;Name=5" evidence="5">
    <location>
        <begin position="178"/>
        <end position="198"/>
    </location>
</feature>
<feature type="topological domain" description="Cytoplasmic" evidence="7">
    <location>
        <begin position="199"/>
        <end position="208"/>
    </location>
</feature>
<feature type="transmembrane region" description="Helical;Name=6" evidence="5">
    <location>
        <begin position="209"/>
        <end position="229"/>
    </location>
</feature>
<feature type="topological domain" description="Lumenal" evidence="7">
    <location>
        <begin position="230"/>
        <end position="233"/>
    </location>
</feature>
<feature type="transmembrane region" description="Helical;Name=7" evidence="5">
    <location>
        <begin position="234"/>
        <end position="254"/>
    </location>
</feature>
<feature type="topological domain" description="Cytoplasmic" evidence="7">
    <location>
        <begin position="255"/>
        <end position="297"/>
    </location>
</feature>
<feature type="region of interest" description="Disordered" evidence="6">
    <location>
        <begin position="259"/>
        <end position="297"/>
    </location>
</feature>
<feature type="compositionally biased region" description="Basic and acidic residues" evidence="6">
    <location>
        <begin position="279"/>
        <end position="288"/>
    </location>
</feature>
<feature type="binding site" evidence="3">
    <location>
        <position position="74"/>
    </location>
    <ligand>
        <name>Ca(2+)</name>
        <dbReference type="ChEBI" id="CHEBI:29108"/>
    </ligand>
</feature>
<feature type="binding site" evidence="4">
    <location>
        <position position="122"/>
    </location>
    <ligand>
        <name>a 1,2-diacyl-sn-glycero-3-phospho-(1D-myo-inositol-4,5-bisphosphate)</name>
        <dbReference type="ChEBI" id="CHEBI:58456"/>
    </ligand>
</feature>
<feature type="binding site" evidence="4">
    <location>
        <position position="126"/>
    </location>
    <ligand>
        <name>a 1,2-diacyl-sn-glycero-3-phospho-(1D-myo-inositol-4,5-bisphosphate)</name>
        <dbReference type="ChEBI" id="CHEBI:58456"/>
    </ligand>
</feature>
<protein>
    <recommendedName>
        <fullName>Trimeric intracellular cation channel type A</fullName>
        <shortName>TRIC-A</shortName>
        <shortName>TRICA</shortName>
    </recommendedName>
    <alternativeName>
        <fullName>27 kDa sarcoplasmic reticulum protein</fullName>
    </alternativeName>
    <alternativeName>
        <fullName>SPR-27</fullName>
    </alternativeName>
    <alternativeName>
        <fullName>Transmembrane protein 38A</fullName>
    </alternativeName>
</protein>
<proteinExistence type="evidence at transcript level"/>
<organism>
    <name type="scientific">Rattus norvegicus</name>
    <name type="common">Rat</name>
    <dbReference type="NCBI Taxonomy" id="10116"/>
    <lineage>
        <taxon>Eukaryota</taxon>
        <taxon>Metazoa</taxon>
        <taxon>Chordata</taxon>
        <taxon>Craniata</taxon>
        <taxon>Vertebrata</taxon>
        <taxon>Euteleostomi</taxon>
        <taxon>Mammalia</taxon>
        <taxon>Eutheria</taxon>
        <taxon>Euarchontoglires</taxon>
        <taxon>Glires</taxon>
        <taxon>Rodentia</taxon>
        <taxon>Myomorpha</taxon>
        <taxon>Muroidea</taxon>
        <taxon>Muridae</taxon>
        <taxon>Murinae</taxon>
        <taxon>Rattus</taxon>
    </lineage>
</organism>
<name>TM38A_RAT</name>
<accession>A6ZIQ8</accession>
<gene>
    <name evidence="2" type="primary">Tmem38a</name>
</gene>
<evidence type="ECO:0000250" key="1">
    <source>
        <dbReference type="UniProtKB" id="A5A6S6"/>
    </source>
</evidence>
<evidence type="ECO:0000250" key="2">
    <source>
        <dbReference type="UniProtKB" id="Q3TMP8"/>
    </source>
</evidence>
<evidence type="ECO:0000250" key="3">
    <source>
        <dbReference type="UniProtKB" id="Q5ZK43"/>
    </source>
</evidence>
<evidence type="ECO:0000250" key="4">
    <source>
        <dbReference type="UniProtKB" id="Q9NA73"/>
    </source>
</evidence>
<evidence type="ECO:0000255" key="5"/>
<evidence type="ECO:0000256" key="6">
    <source>
        <dbReference type="SAM" id="MobiDB-lite"/>
    </source>
</evidence>
<evidence type="ECO:0000305" key="7"/>
<evidence type="ECO:0000312" key="8">
    <source>
        <dbReference type="EMBL" id="ABR68564.1"/>
    </source>
</evidence>
<dbReference type="EMBL" id="EF690436">
    <property type="protein sequence ID" value="ABR68564.1"/>
    <property type="molecule type" value="mRNA"/>
</dbReference>
<dbReference type="RefSeq" id="NP_001093645.1">
    <property type="nucleotide sequence ID" value="NM_001100175.1"/>
</dbReference>
<dbReference type="SMR" id="A6ZIQ8"/>
<dbReference type="BioGRID" id="258417">
    <property type="interactions" value="2"/>
</dbReference>
<dbReference type="FunCoup" id="A6ZIQ8">
    <property type="interactions" value="1308"/>
</dbReference>
<dbReference type="IntAct" id="A6ZIQ8">
    <property type="interactions" value="1"/>
</dbReference>
<dbReference type="STRING" id="10116.ENSRNOP00000059284"/>
<dbReference type="PhosphoSitePlus" id="A6ZIQ8"/>
<dbReference type="PaxDb" id="10116-ENSRNOP00000059284"/>
<dbReference type="GeneID" id="306327"/>
<dbReference type="KEGG" id="rno:306327"/>
<dbReference type="UCSC" id="RGD:1307901">
    <property type="organism name" value="rat"/>
</dbReference>
<dbReference type="AGR" id="RGD:1307901"/>
<dbReference type="CTD" id="79041"/>
<dbReference type="RGD" id="1307901">
    <property type="gene designation" value="Tmem38a"/>
</dbReference>
<dbReference type="eggNOG" id="KOG3944">
    <property type="taxonomic scope" value="Eukaryota"/>
</dbReference>
<dbReference type="InParanoid" id="A6ZIQ8"/>
<dbReference type="PhylomeDB" id="A6ZIQ8"/>
<dbReference type="PRO" id="PR:A6ZIQ8"/>
<dbReference type="Proteomes" id="UP000002494">
    <property type="component" value="Unplaced"/>
</dbReference>
<dbReference type="GO" id="GO:0031965">
    <property type="term" value="C:nuclear membrane"/>
    <property type="evidence" value="ECO:0000250"/>
    <property type="project" value="UniProtKB"/>
</dbReference>
<dbReference type="GO" id="GO:0016529">
    <property type="term" value="C:sarcoplasmic reticulum"/>
    <property type="evidence" value="ECO:0000266"/>
    <property type="project" value="RGD"/>
</dbReference>
<dbReference type="GO" id="GO:0033017">
    <property type="term" value="C:sarcoplasmic reticulum membrane"/>
    <property type="evidence" value="ECO:0000250"/>
    <property type="project" value="UniProtKB"/>
</dbReference>
<dbReference type="GO" id="GO:0042802">
    <property type="term" value="F:identical protein binding"/>
    <property type="evidence" value="ECO:0000266"/>
    <property type="project" value="RGD"/>
</dbReference>
<dbReference type="GO" id="GO:0046872">
    <property type="term" value="F:metal ion binding"/>
    <property type="evidence" value="ECO:0007669"/>
    <property type="project" value="UniProtKB-KW"/>
</dbReference>
<dbReference type="GO" id="GO:0005267">
    <property type="term" value="F:potassium channel activity"/>
    <property type="evidence" value="ECO:0000250"/>
    <property type="project" value="UniProtKB"/>
</dbReference>
<dbReference type="GO" id="GO:0071313">
    <property type="term" value="P:cellular response to caffeine"/>
    <property type="evidence" value="ECO:0000266"/>
    <property type="project" value="RGD"/>
</dbReference>
<dbReference type="GO" id="GO:0007029">
    <property type="term" value="P:endoplasmic reticulum organization"/>
    <property type="evidence" value="ECO:0000266"/>
    <property type="project" value="RGD"/>
</dbReference>
<dbReference type="GO" id="GO:0098662">
    <property type="term" value="P:inorganic cation transmembrane transport"/>
    <property type="evidence" value="ECO:0000266"/>
    <property type="project" value="RGD"/>
</dbReference>
<dbReference type="GO" id="GO:0071805">
    <property type="term" value="P:potassium ion transmembrane transport"/>
    <property type="evidence" value="ECO:0000266"/>
    <property type="project" value="RGD"/>
</dbReference>
<dbReference type="GO" id="GO:0010881">
    <property type="term" value="P:regulation of cardiac muscle contraction by regulation of the release of sequestered calcium ion"/>
    <property type="evidence" value="ECO:0000266"/>
    <property type="project" value="RGD"/>
</dbReference>
<dbReference type="GO" id="GO:0051279">
    <property type="term" value="P:regulation of release of sequestered calcium ion into cytosol"/>
    <property type="evidence" value="ECO:0000250"/>
    <property type="project" value="UniProtKB"/>
</dbReference>
<dbReference type="GO" id="GO:0014808">
    <property type="term" value="P:release of sequestered calcium ion into cytosol by sarcoplasmic reticulum"/>
    <property type="evidence" value="ECO:0000266"/>
    <property type="project" value="RGD"/>
</dbReference>
<dbReference type="InterPro" id="IPR007866">
    <property type="entry name" value="TRIC_channel"/>
</dbReference>
<dbReference type="PANTHER" id="PTHR12454">
    <property type="entry name" value="TRIMERIC INTRACELLULAR CATION CHANNEL"/>
    <property type="match status" value="1"/>
</dbReference>
<dbReference type="PANTHER" id="PTHR12454:SF3">
    <property type="entry name" value="TRIMERIC INTRACELLULAR CATION CHANNEL TYPE A"/>
    <property type="match status" value="1"/>
</dbReference>
<dbReference type="Pfam" id="PF05197">
    <property type="entry name" value="TRIC"/>
    <property type="match status" value="1"/>
</dbReference>
<keyword id="KW-0106">Calcium</keyword>
<keyword id="KW-0407">Ion channel</keyword>
<keyword id="KW-0406">Ion transport</keyword>
<keyword id="KW-0472">Membrane</keyword>
<keyword id="KW-0479">Metal-binding</keyword>
<keyword id="KW-0539">Nucleus</keyword>
<keyword id="KW-0630">Potassium</keyword>
<keyword id="KW-0631">Potassium channel</keyword>
<keyword id="KW-0633">Potassium transport</keyword>
<keyword id="KW-1185">Reference proteome</keyword>
<keyword id="KW-0703">Sarcoplasmic reticulum</keyword>
<keyword id="KW-0812">Transmembrane</keyword>
<keyword id="KW-1133">Transmembrane helix</keyword>
<keyword id="KW-0813">Transport</keyword>
<reference evidence="8" key="1">
    <citation type="submission" date="2007-06" db="EMBL/GenBank/DDBJ databases">
        <title>SPR-27 is a novel component of the supramolecular signaling complex involved in skeletal muscle excitation-contraction coupling.</title>
        <authorList>
            <person name="Bleunven C."/>
            <person name="Treves S."/>
            <person name="Leo E."/>
            <person name="Ronjat M."/>
            <person name="De Waard M."/>
            <person name="Kern G."/>
            <person name="Flucher B.E."/>
            <person name="Zorzato F."/>
        </authorList>
    </citation>
    <scope>NUCLEOTIDE SEQUENCE [MRNA]</scope>
</reference>
<comment type="function">
    <text evidence="1">Intracellular monovalent cation channel required for maintenance of rapid intracellular calcium release. Acts as a potassium counter-ion channel that functions in synchronization with calcium release from intracellular stores. Opened by a change of voltage within the sarcoplasmic reticulum lumen.</text>
</comment>
<comment type="catalytic activity">
    <reaction evidence="1">
        <text>K(+)(in) = K(+)(out)</text>
        <dbReference type="Rhea" id="RHEA:29463"/>
        <dbReference type="ChEBI" id="CHEBI:29103"/>
    </reaction>
</comment>
<comment type="activity regulation">
    <text evidence="1">Channel activity is activated by a change of voltage within the sarcoplasmic reticulum lumen and blocked by luminal high Ca(2+) levels.</text>
</comment>
<comment type="subunit">
    <text evidence="1">Homotrimer; conformation seems to be controled by binding to diacylglycerol (DAG).</text>
</comment>
<comment type="subcellular location">
    <subcellularLocation>
        <location evidence="1">Sarcoplasmic reticulum membrane</location>
        <topology evidence="1">Multi-pass membrane protein</topology>
    </subcellularLocation>
    <subcellularLocation>
        <location evidence="1">Nucleus membrane</location>
    </subcellularLocation>
</comment>
<comment type="similarity">
    <text evidence="5">Belongs to the TMEM38 family.</text>
</comment>
<sequence length="297" mass="33276">MDLISSLSLGELALSFSRVPLFPVFDLSYFIVSIIYLKYEPGSVELSRRHPVASWLCAMLHCFGSYILADLLLGEPIIDYFSNSSSILLASGVWYLIFFCPLDLFYKCVCFLPVKLIFVAMKEVVRVRKIAVGIHHAHHYHHGWFIMIATGWVKGSGVALLSNLEQLLRGVWKPETNEILHMSFPTKASLYGAILFTLQQTRWLPVSKASLIFVFTMFMVSCKVFLTATHSHSSPFDVLEGYICPVLFGATWGGDHHHDNHGAPHGMGLGTQHSGLPAKAKEELSEGFRKKKTKKAD</sequence>